<keyword id="KW-0963">Cytoplasm</keyword>
<keyword id="KW-0251">Elongation factor</keyword>
<keyword id="KW-0379">Hydroxylation</keyword>
<keyword id="KW-0648">Protein biosynthesis</keyword>
<keyword id="KW-1185">Reference proteome</keyword>
<sequence>MAQYSTNEFKGGLKIMLDGDPYTIVENEFVKPGKGQAFNRVKVRNLKTGKVIDRTFKSGESVEAADVLETEMQFLYSDGEFFHMMDPETFEQKAAPASAVGDAAKWLKEQAMCTVILWNDEPLTVEPPNFVELRVVETDPGVRGDTSGGGGKPATLETGAVVRVPLFIEEGELLKVDTRSGEYVGRVKG</sequence>
<reference key="1">
    <citation type="submission" date="2006-08" db="EMBL/GenBank/DDBJ databases">
        <title>Complete sequence of Alkalilimnicola ehrilichei MLHE-1.</title>
        <authorList>
            <person name="Copeland A."/>
            <person name="Lucas S."/>
            <person name="Lapidus A."/>
            <person name="Barry K."/>
            <person name="Detter J.C."/>
            <person name="Glavina del Rio T."/>
            <person name="Hammon N."/>
            <person name="Israni S."/>
            <person name="Dalin E."/>
            <person name="Tice H."/>
            <person name="Pitluck S."/>
            <person name="Sims D."/>
            <person name="Brettin T."/>
            <person name="Bruce D."/>
            <person name="Han C."/>
            <person name="Tapia R."/>
            <person name="Gilna P."/>
            <person name="Schmutz J."/>
            <person name="Larimer F."/>
            <person name="Land M."/>
            <person name="Hauser L."/>
            <person name="Kyrpides N."/>
            <person name="Mikhailova N."/>
            <person name="Oremland R.S."/>
            <person name="Hoeft S.E."/>
            <person name="Switzer-Blum J."/>
            <person name="Kulp T."/>
            <person name="King G."/>
            <person name="Tabita R."/>
            <person name="Witte B."/>
            <person name="Santini J.M."/>
            <person name="Basu P."/>
            <person name="Hollibaugh J.T."/>
            <person name="Xie G."/>
            <person name="Stolz J.F."/>
            <person name="Richardson P."/>
        </authorList>
    </citation>
    <scope>NUCLEOTIDE SEQUENCE [LARGE SCALE GENOMIC DNA]</scope>
    <source>
        <strain>ATCC BAA-1101 / DSM 17681 / MLHE-1</strain>
    </source>
</reference>
<feature type="chain" id="PRO_1000010674" description="Elongation factor P">
    <location>
        <begin position="1"/>
        <end position="189"/>
    </location>
</feature>
<feature type="modified residue" description="N6-(3,6-diaminohexanoyl)-5-hydroxylysine" evidence="1">
    <location>
        <position position="34"/>
    </location>
</feature>
<accession>Q0AAU9</accession>
<comment type="function">
    <text evidence="1">Involved in peptide bond synthesis. Alleviates ribosome stalling that occurs when 3 or more consecutive Pro residues or the sequence PPG is present in a protein, possibly by augmenting the peptidyl transferase activity of the ribosome. Modification of Lys-34 is required for alleviation.</text>
</comment>
<comment type="pathway">
    <text evidence="1">Protein biosynthesis; polypeptide chain elongation.</text>
</comment>
<comment type="subcellular location">
    <subcellularLocation>
        <location evidence="1">Cytoplasm</location>
    </subcellularLocation>
</comment>
<comment type="PTM">
    <text evidence="1">May be beta-lysylated on the epsilon-amino group of Lys-34 by the combined action of EpmA and EpmB, and then hydroxylated on the C5 position of the same residue by EpmC (if this protein is present). Lysylation is critical for the stimulatory effect of EF-P on peptide-bond formation. The lysylation moiety may extend toward the peptidyltransferase center and stabilize the terminal 3-CCA end of the tRNA. Hydroxylation of the C5 position on Lys-34 may allow additional potential stabilizing hydrogen-bond interactions with the P-tRNA.</text>
</comment>
<comment type="similarity">
    <text evidence="1">Belongs to the elongation factor P family.</text>
</comment>
<evidence type="ECO:0000255" key="1">
    <source>
        <dbReference type="HAMAP-Rule" id="MF_00141"/>
    </source>
</evidence>
<gene>
    <name evidence="1" type="primary">efp</name>
    <name type="ordered locus">Mlg_0684</name>
</gene>
<name>EFP_ALKEH</name>
<organism>
    <name type="scientific">Alkalilimnicola ehrlichii (strain ATCC BAA-1101 / DSM 17681 / MLHE-1)</name>
    <dbReference type="NCBI Taxonomy" id="187272"/>
    <lineage>
        <taxon>Bacteria</taxon>
        <taxon>Pseudomonadati</taxon>
        <taxon>Pseudomonadota</taxon>
        <taxon>Gammaproteobacteria</taxon>
        <taxon>Chromatiales</taxon>
        <taxon>Ectothiorhodospiraceae</taxon>
        <taxon>Alkalilimnicola</taxon>
    </lineage>
</organism>
<proteinExistence type="inferred from homology"/>
<dbReference type="EMBL" id="CP000453">
    <property type="protein sequence ID" value="ABI56038.1"/>
    <property type="molecule type" value="Genomic_DNA"/>
</dbReference>
<dbReference type="RefSeq" id="WP_011628433.1">
    <property type="nucleotide sequence ID" value="NC_008340.1"/>
</dbReference>
<dbReference type="SMR" id="Q0AAU9"/>
<dbReference type="KEGG" id="aeh:Mlg_0684"/>
<dbReference type="eggNOG" id="COG0231">
    <property type="taxonomic scope" value="Bacteria"/>
</dbReference>
<dbReference type="HOGENOM" id="CLU_074944_0_0_6"/>
<dbReference type="OrthoDB" id="9801844at2"/>
<dbReference type="UniPathway" id="UPA00345"/>
<dbReference type="Proteomes" id="UP000001962">
    <property type="component" value="Chromosome"/>
</dbReference>
<dbReference type="GO" id="GO:0005737">
    <property type="term" value="C:cytoplasm"/>
    <property type="evidence" value="ECO:0007669"/>
    <property type="project" value="UniProtKB-SubCell"/>
</dbReference>
<dbReference type="GO" id="GO:0003746">
    <property type="term" value="F:translation elongation factor activity"/>
    <property type="evidence" value="ECO:0007669"/>
    <property type="project" value="UniProtKB-UniRule"/>
</dbReference>
<dbReference type="GO" id="GO:0043043">
    <property type="term" value="P:peptide biosynthetic process"/>
    <property type="evidence" value="ECO:0007669"/>
    <property type="project" value="InterPro"/>
</dbReference>
<dbReference type="CDD" id="cd04470">
    <property type="entry name" value="S1_EF-P_repeat_1"/>
    <property type="match status" value="1"/>
</dbReference>
<dbReference type="CDD" id="cd05794">
    <property type="entry name" value="S1_EF-P_repeat_2"/>
    <property type="match status" value="1"/>
</dbReference>
<dbReference type="FunFam" id="2.30.30.30:FF:000003">
    <property type="entry name" value="Elongation factor P"/>
    <property type="match status" value="1"/>
</dbReference>
<dbReference type="FunFam" id="2.40.50.140:FF:000004">
    <property type="entry name" value="Elongation factor P"/>
    <property type="match status" value="1"/>
</dbReference>
<dbReference type="FunFam" id="2.40.50.140:FF:000009">
    <property type="entry name" value="Elongation factor P"/>
    <property type="match status" value="1"/>
</dbReference>
<dbReference type="Gene3D" id="2.30.30.30">
    <property type="match status" value="1"/>
</dbReference>
<dbReference type="Gene3D" id="2.40.50.140">
    <property type="entry name" value="Nucleic acid-binding proteins"/>
    <property type="match status" value="2"/>
</dbReference>
<dbReference type="HAMAP" id="MF_00141">
    <property type="entry name" value="EF_P"/>
    <property type="match status" value="1"/>
</dbReference>
<dbReference type="InterPro" id="IPR015365">
    <property type="entry name" value="Elong-fact-P_C"/>
</dbReference>
<dbReference type="InterPro" id="IPR012340">
    <property type="entry name" value="NA-bd_OB-fold"/>
</dbReference>
<dbReference type="InterPro" id="IPR014722">
    <property type="entry name" value="Rib_uL2_dom2"/>
</dbReference>
<dbReference type="InterPro" id="IPR020599">
    <property type="entry name" value="Transl_elong_fac_P/YeiP"/>
</dbReference>
<dbReference type="InterPro" id="IPR013185">
    <property type="entry name" value="Transl_elong_KOW-like"/>
</dbReference>
<dbReference type="InterPro" id="IPR001059">
    <property type="entry name" value="Transl_elong_P/YeiP_cen"/>
</dbReference>
<dbReference type="InterPro" id="IPR013852">
    <property type="entry name" value="Transl_elong_P/YeiP_CS"/>
</dbReference>
<dbReference type="InterPro" id="IPR011768">
    <property type="entry name" value="Transl_elongation_fac_P"/>
</dbReference>
<dbReference type="InterPro" id="IPR008991">
    <property type="entry name" value="Translation_prot_SH3-like_sf"/>
</dbReference>
<dbReference type="NCBIfam" id="TIGR00038">
    <property type="entry name" value="efp"/>
    <property type="match status" value="1"/>
</dbReference>
<dbReference type="NCBIfam" id="NF001810">
    <property type="entry name" value="PRK00529.1"/>
    <property type="match status" value="1"/>
</dbReference>
<dbReference type="PANTHER" id="PTHR30053">
    <property type="entry name" value="ELONGATION FACTOR P"/>
    <property type="match status" value="1"/>
</dbReference>
<dbReference type="PANTHER" id="PTHR30053:SF12">
    <property type="entry name" value="ELONGATION FACTOR P (EF-P) FAMILY PROTEIN"/>
    <property type="match status" value="1"/>
</dbReference>
<dbReference type="Pfam" id="PF01132">
    <property type="entry name" value="EFP"/>
    <property type="match status" value="1"/>
</dbReference>
<dbReference type="Pfam" id="PF08207">
    <property type="entry name" value="EFP_N"/>
    <property type="match status" value="1"/>
</dbReference>
<dbReference type="Pfam" id="PF09285">
    <property type="entry name" value="Elong-fact-P_C"/>
    <property type="match status" value="1"/>
</dbReference>
<dbReference type="PIRSF" id="PIRSF005901">
    <property type="entry name" value="EF-P"/>
    <property type="match status" value="1"/>
</dbReference>
<dbReference type="SMART" id="SM01185">
    <property type="entry name" value="EFP"/>
    <property type="match status" value="1"/>
</dbReference>
<dbReference type="SMART" id="SM00841">
    <property type="entry name" value="Elong-fact-P_C"/>
    <property type="match status" value="1"/>
</dbReference>
<dbReference type="SUPFAM" id="SSF50249">
    <property type="entry name" value="Nucleic acid-binding proteins"/>
    <property type="match status" value="2"/>
</dbReference>
<dbReference type="SUPFAM" id="SSF50104">
    <property type="entry name" value="Translation proteins SH3-like domain"/>
    <property type="match status" value="1"/>
</dbReference>
<dbReference type="PROSITE" id="PS01275">
    <property type="entry name" value="EFP"/>
    <property type="match status" value="1"/>
</dbReference>
<protein>
    <recommendedName>
        <fullName evidence="1">Elongation factor P</fullName>
        <shortName evidence="1">EF-P</shortName>
    </recommendedName>
</protein>